<proteinExistence type="inferred from homology"/>
<dbReference type="EMBL" id="AAHF01000002">
    <property type="protein sequence ID" value="EAL92286.1"/>
    <property type="molecule type" value="Genomic_DNA"/>
</dbReference>
<dbReference type="RefSeq" id="XP_754324.1">
    <property type="nucleotide sequence ID" value="XM_749231.1"/>
</dbReference>
<dbReference type="SMR" id="Q4WYG7"/>
<dbReference type="FunCoup" id="Q4WYG7">
    <property type="interactions" value="235"/>
</dbReference>
<dbReference type="STRING" id="330879.Q4WYG7"/>
<dbReference type="GlyCosmos" id="Q4WYG7">
    <property type="glycosylation" value="1 site, No reported glycans"/>
</dbReference>
<dbReference type="EnsemblFungi" id="EAL92286">
    <property type="protein sequence ID" value="EAL92286"/>
    <property type="gene ID" value="AFUA_3G12970"/>
</dbReference>
<dbReference type="GeneID" id="3512452"/>
<dbReference type="KEGG" id="afm:AFUA_3G12970"/>
<dbReference type="VEuPathDB" id="FungiDB:Afu3g12970"/>
<dbReference type="eggNOG" id="KOG1362">
    <property type="taxonomic scope" value="Eukaryota"/>
</dbReference>
<dbReference type="HOGENOM" id="CLU_026724_0_0_1"/>
<dbReference type="InParanoid" id="Q4WYG7"/>
<dbReference type="OMA" id="DTIFVAM"/>
<dbReference type="OrthoDB" id="44736at2759"/>
<dbReference type="Proteomes" id="UP000002530">
    <property type="component" value="Chromosome 3"/>
</dbReference>
<dbReference type="GO" id="GO:0016020">
    <property type="term" value="C:membrane"/>
    <property type="evidence" value="ECO:0000318"/>
    <property type="project" value="GO_Central"/>
</dbReference>
<dbReference type="GO" id="GO:0005886">
    <property type="term" value="C:plasma membrane"/>
    <property type="evidence" value="ECO:0007669"/>
    <property type="project" value="UniProtKB-SubCell"/>
</dbReference>
<dbReference type="GO" id="GO:0022857">
    <property type="term" value="F:transmembrane transporter activity"/>
    <property type="evidence" value="ECO:0000318"/>
    <property type="project" value="GO_Central"/>
</dbReference>
<dbReference type="GO" id="GO:0055085">
    <property type="term" value="P:transmembrane transport"/>
    <property type="evidence" value="ECO:0000318"/>
    <property type="project" value="GO_Central"/>
</dbReference>
<dbReference type="InterPro" id="IPR007603">
    <property type="entry name" value="Choline_transptr-like"/>
</dbReference>
<dbReference type="PANTHER" id="PTHR12385">
    <property type="entry name" value="CHOLINE TRANSPORTER-LIKE (SLC FAMILY 44)"/>
    <property type="match status" value="1"/>
</dbReference>
<dbReference type="PANTHER" id="PTHR12385:SF4">
    <property type="entry name" value="PROTEIN PNS1"/>
    <property type="match status" value="1"/>
</dbReference>
<dbReference type="Pfam" id="PF04515">
    <property type="entry name" value="Choline_transpo"/>
    <property type="match status" value="1"/>
</dbReference>
<keyword id="KW-1003">Cell membrane</keyword>
<keyword id="KW-0325">Glycoprotein</keyword>
<keyword id="KW-0472">Membrane</keyword>
<keyword id="KW-1185">Reference proteome</keyword>
<keyword id="KW-0812">Transmembrane</keyword>
<keyword id="KW-1133">Transmembrane helix</keyword>
<keyword id="KW-0813">Transport</keyword>
<organism>
    <name type="scientific">Aspergillus fumigatus (strain ATCC MYA-4609 / CBS 101355 / FGSC A1100 / Af293)</name>
    <name type="common">Neosartorya fumigata</name>
    <dbReference type="NCBI Taxonomy" id="330879"/>
    <lineage>
        <taxon>Eukaryota</taxon>
        <taxon>Fungi</taxon>
        <taxon>Dikarya</taxon>
        <taxon>Ascomycota</taxon>
        <taxon>Pezizomycotina</taxon>
        <taxon>Eurotiomycetes</taxon>
        <taxon>Eurotiomycetidae</taxon>
        <taxon>Eurotiales</taxon>
        <taxon>Aspergillaceae</taxon>
        <taxon>Aspergillus</taxon>
        <taxon>Aspergillus subgen. Fumigati</taxon>
    </lineage>
</organism>
<feature type="chain" id="PRO_0000191730" description="Protein pns1">
    <location>
        <begin position="1"/>
        <end position="537"/>
    </location>
</feature>
<feature type="topological domain" description="Cytoplasmic" evidence="2">
    <location>
        <begin position="1"/>
        <end position="81"/>
    </location>
</feature>
<feature type="transmembrane region" description="Helical" evidence="2">
    <location>
        <begin position="82"/>
        <end position="102"/>
    </location>
</feature>
<feature type="topological domain" description="Extracellular" evidence="2">
    <location>
        <begin position="103"/>
        <end position="130"/>
    </location>
</feature>
<feature type="transmembrane region" description="Helical" evidence="2">
    <location>
        <begin position="131"/>
        <end position="151"/>
    </location>
</feature>
<feature type="topological domain" description="Cytoplasmic" evidence="2">
    <location>
        <begin position="152"/>
        <end position="158"/>
    </location>
</feature>
<feature type="transmembrane region" description="Helical" evidence="2">
    <location>
        <begin position="159"/>
        <end position="179"/>
    </location>
</feature>
<feature type="topological domain" description="Extracellular" evidence="2">
    <location>
        <begin position="180"/>
        <end position="184"/>
    </location>
</feature>
<feature type="transmembrane region" description="Helical" evidence="2">
    <location>
        <begin position="185"/>
        <end position="205"/>
    </location>
</feature>
<feature type="topological domain" description="Cytoplasmic" evidence="2">
    <location>
        <begin position="206"/>
        <end position="227"/>
    </location>
</feature>
<feature type="transmembrane region" description="Helical" evidence="2">
    <location>
        <begin position="228"/>
        <end position="248"/>
    </location>
</feature>
<feature type="topological domain" description="Extracellular" evidence="2">
    <location>
        <begin position="249"/>
        <end position="275"/>
    </location>
</feature>
<feature type="transmembrane region" description="Helical" evidence="2">
    <location>
        <begin position="276"/>
        <end position="296"/>
    </location>
</feature>
<feature type="topological domain" description="Cytoplasmic" evidence="2">
    <location>
        <begin position="297"/>
        <end position="333"/>
    </location>
</feature>
<feature type="transmembrane region" description="Helical" evidence="2">
    <location>
        <begin position="334"/>
        <end position="354"/>
    </location>
</feature>
<feature type="topological domain" description="Extracellular" evidence="2">
    <location>
        <begin position="355"/>
        <end position="370"/>
    </location>
</feature>
<feature type="transmembrane region" description="Helical" evidence="2">
    <location>
        <begin position="371"/>
        <end position="391"/>
    </location>
</feature>
<feature type="topological domain" description="Cytoplasmic" evidence="2">
    <location>
        <begin position="392"/>
        <end position="432"/>
    </location>
</feature>
<feature type="transmembrane region" description="Helical" evidence="2">
    <location>
        <begin position="433"/>
        <end position="453"/>
    </location>
</feature>
<feature type="topological domain" description="Extracellular" evidence="2">
    <location>
        <begin position="454"/>
        <end position="469"/>
    </location>
</feature>
<feature type="transmembrane region" description="Helical" evidence="2">
    <location>
        <begin position="470"/>
        <end position="490"/>
    </location>
</feature>
<feature type="topological domain" description="Cytoplasmic" evidence="2">
    <location>
        <begin position="491"/>
        <end position="537"/>
    </location>
</feature>
<feature type="region of interest" description="Disordered" evidence="3">
    <location>
        <begin position="1"/>
        <end position="35"/>
    </location>
</feature>
<feature type="compositionally biased region" description="Polar residues" evidence="3">
    <location>
        <begin position="1"/>
        <end position="16"/>
    </location>
</feature>
<feature type="compositionally biased region" description="Low complexity" evidence="3">
    <location>
        <begin position="23"/>
        <end position="35"/>
    </location>
</feature>
<feature type="glycosylation site" description="N-linked (GlcNAc...) asparagine" evidence="2">
    <location>
        <position position="469"/>
    </location>
</feature>
<sequence>MSGQAASYYNPSQSYGDFQPGMQNPQQQPDYYNNNVSNHGYDLNFQRGPEPKPPTEPPPTYNQAVYGFDDAFKIERPKYHDIWAGLLFIAVFLGYVAVSGVAIHRYAKYKGLNGDGIYDSSNSFSLDTNTLILFIFVLCVALAFSYAYFLGARYFSKLFIWVTGILNIVFALATGIYYIARKQYGGGIVFLLFGVFAIICFISWIPRIPFSAFMLQTSIDVSRKYGHMFIVSTIGGLVAVAFAAWFSVTLVSIYVAYEPSSSGSNPSCSDGGCSRARVIGLVVYVTFAMYWFSEWLKNTIHTTIAGVYGSWYFWSQSPNGMPRGSTRGAFRRATTYSFGSVSFGSLIIAIINMLRQACSVAQRNEAAEGSIVGSIMFWILGCFIAILDWLVTLFNRYAFCHIALYGKAYIPAAKDTWTMMRDRGIDALVNDCLIGPVLTMGSVFVSYVCALLAYLYLQFTKPSYNADGNFTAVIMAFAFVIGLQICQIFMTPVSSGIETIFVAMGWDPQVMIRDHPDLYYRMIQVYPRVQQAIQPSA</sequence>
<protein>
    <recommendedName>
        <fullName>Protein pns1</fullName>
    </recommendedName>
</protein>
<evidence type="ECO:0000250" key="1"/>
<evidence type="ECO:0000255" key="2"/>
<evidence type="ECO:0000256" key="3">
    <source>
        <dbReference type="SAM" id="MobiDB-lite"/>
    </source>
</evidence>
<evidence type="ECO:0000305" key="4"/>
<reference key="1">
    <citation type="journal article" date="2005" name="Nature">
        <title>Genomic sequence of the pathogenic and allergenic filamentous fungus Aspergillus fumigatus.</title>
        <authorList>
            <person name="Nierman W.C."/>
            <person name="Pain A."/>
            <person name="Anderson M.J."/>
            <person name="Wortman J.R."/>
            <person name="Kim H.S."/>
            <person name="Arroyo J."/>
            <person name="Berriman M."/>
            <person name="Abe K."/>
            <person name="Archer D.B."/>
            <person name="Bermejo C."/>
            <person name="Bennett J.W."/>
            <person name="Bowyer P."/>
            <person name="Chen D."/>
            <person name="Collins M."/>
            <person name="Coulsen R."/>
            <person name="Davies R."/>
            <person name="Dyer P.S."/>
            <person name="Farman M.L."/>
            <person name="Fedorova N."/>
            <person name="Fedorova N.D."/>
            <person name="Feldblyum T.V."/>
            <person name="Fischer R."/>
            <person name="Fosker N."/>
            <person name="Fraser A."/>
            <person name="Garcia J.L."/>
            <person name="Garcia M.J."/>
            <person name="Goble A."/>
            <person name="Goldman G.H."/>
            <person name="Gomi K."/>
            <person name="Griffith-Jones S."/>
            <person name="Gwilliam R."/>
            <person name="Haas B.J."/>
            <person name="Haas H."/>
            <person name="Harris D.E."/>
            <person name="Horiuchi H."/>
            <person name="Huang J."/>
            <person name="Humphray S."/>
            <person name="Jimenez J."/>
            <person name="Keller N."/>
            <person name="Khouri H."/>
            <person name="Kitamoto K."/>
            <person name="Kobayashi T."/>
            <person name="Konzack S."/>
            <person name="Kulkarni R."/>
            <person name="Kumagai T."/>
            <person name="Lafton A."/>
            <person name="Latge J.-P."/>
            <person name="Li W."/>
            <person name="Lord A."/>
            <person name="Lu C."/>
            <person name="Majoros W.H."/>
            <person name="May G.S."/>
            <person name="Miller B.L."/>
            <person name="Mohamoud Y."/>
            <person name="Molina M."/>
            <person name="Monod M."/>
            <person name="Mouyna I."/>
            <person name="Mulligan S."/>
            <person name="Murphy L.D."/>
            <person name="O'Neil S."/>
            <person name="Paulsen I."/>
            <person name="Penalva M.A."/>
            <person name="Pertea M."/>
            <person name="Price C."/>
            <person name="Pritchard B.L."/>
            <person name="Quail M.A."/>
            <person name="Rabbinowitsch E."/>
            <person name="Rawlins N."/>
            <person name="Rajandream M.A."/>
            <person name="Reichard U."/>
            <person name="Renauld H."/>
            <person name="Robson G.D."/>
            <person name="Rodriguez de Cordoba S."/>
            <person name="Rodriguez-Pena J.M."/>
            <person name="Ronning C.M."/>
            <person name="Rutter S."/>
            <person name="Salzberg S.L."/>
            <person name="Sanchez M."/>
            <person name="Sanchez-Ferrero J.C."/>
            <person name="Saunders D."/>
            <person name="Seeger K."/>
            <person name="Squares R."/>
            <person name="Squares S."/>
            <person name="Takeuchi M."/>
            <person name="Tekaia F."/>
            <person name="Turner G."/>
            <person name="Vazquez de Aldana C.R."/>
            <person name="Weidman J."/>
            <person name="White O."/>
            <person name="Woodward J.R."/>
            <person name="Yu J.-H."/>
            <person name="Fraser C.M."/>
            <person name="Galagan J.E."/>
            <person name="Asai K."/>
            <person name="Machida M."/>
            <person name="Hall N."/>
            <person name="Barrell B.G."/>
            <person name="Denning D.W."/>
        </authorList>
    </citation>
    <scope>NUCLEOTIDE SEQUENCE [LARGE SCALE GENOMIC DNA]</scope>
    <source>
        <strain>ATCC MYA-4609 / CBS 101355 / FGSC A1100 / Af293</strain>
    </source>
</reference>
<accession>Q4WYG7</accession>
<name>PNS1_ASPFU</name>
<comment type="function">
    <text evidence="1">Probably involved in transport through the plasma membrane.</text>
</comment>
<comment type="subcellular location">
    <subcellularLocation>
        <location evidence="1">Cell membrane</location>
        <topology evidence="1">Multi-pass membrane protein</topology>
    </subcellularLocation>
</comment>
<comment type="similarity">
    <text evidence="4">Belongs to the CTL (choline transporter-like) family.</text>
</comment>
<gene>
    <name type="primary">pns1</name>
    <name type="ORF">AFUA_3G12970</name>
</gene>